<evidence type="ECO:0000250" key="1">
    <source>
        <dbReference type="UniProtKB" id="P97808"/>
    </source>
</evidence>
<evidence type="ECO:0000255" key="2"/>
<evidence type="ECO:0000256" key="3">
    <source>
        <dbReference type="SAM" id="MobiDB-lite"/>
    </source>
</evidence>
<evidence type="ECO:0000269" key="4">
    <source>
    </source>
</evidence>
<evidence type="ECO:0000269" key="5">
    <source>
    </source>
</evidence>
<evidence type="ECO:0000269" key="6">
    <source>
    </source>
</evidence>
<evidence type="ECO:0000269" key="7">
    <source>
    </source>
</evidence>
<evidence type="ECO:0000269" key="8">
    <source>
    </source>
</evidence>
<evidence type="ECO:0000269" key="9">
    <source ref="5"/>
</evidence>
<evidence type="ECO:0000303" key="10">
    <source>
    </source>
</evidence>
<evidence type="ECO:0000303" key="11">
    <source>
    </source>
</evidence>
<evidence type="ECO:0000305" key="12"/>
<comment type="function">
    <text evidence="1 6 8">Associates with and regulates the activity of the sodium/potassium-transporting ATPase (NKA) which catalyzes the hydrolysis of ATP coupled with the exchange of Na(+) and K(+) ions across the plasma membrane (By similarity). May increase NKA activity by increasing the apparent affinity for Na(+) (PubMed:18263667). Involved in down-regulation of E-cadherin which results in reduced cell adhesion. Promotes metastasis (PubMed:11756660).</text>
</comment>
<comment type="subunit">
    <text evidence="1">Regulatory subunit of the sodium/potassium-transporting ATPase which is composed of a catalytic alpha subunit, a non-catalytic beta subunit and an additional regulatory subunit. The regulatory subunit, a member of the FXYD protein family, modulates the enzymatic activity in a tissue- and isoform-specific way by changing affinities of the Na+/K+-ATPase toward Na(+), K(+) or ATP.</text>
</comment>
<comment type="subcellular location">
    <subcellularLocation>
        <location evidence="6">Cell membrane</location>
        <topology evidence="1">Single-pass type I membrane protein</topology>
    </subcellularLocation>
    <subcellularLocation>
        <location evidence="1">Basolateral cell membrane</location>
        <topology evidence="1">Single-pass type I membrane protein</topology>
    </subcellularLocation>
    <text evidence="1">In kidneys localizes to the basolateral membrane of the connecting tubule.</text>
</comment>
<comment type="alternative products">
    <event type="alternative splicing"/>
    <isoform>
        <id>Q96DB9-1</id>
        <name>1</name>
        <sequence type="displayed"/>
    </isoform>
    <isoform>
        <id>Q96DB9-2</id>
        <name>2</name>
        <sequence type="described" ref="VSP_001584"/>
    </isoform>
</comment>
<comment type="PTM">
    <text evidence="6">Glycosylated.</text>
</comment>
<comment type="similarity">
    <text evidence="12">Belongs to the FXYD family.</text>
</comment>
<comment type="online information" name="Atlas of Genetics and Cytogenetics in Oncology and Haematology">
    <link uri="https://atlasgeneticsoncology.org/gene/40652/FXYD5"/>
</comment>
<name>FXYD5_HUMAN</name>
<protein>
    <recommendedName>
        <fullName>FXYD domain-containing ion transport regulator 5</fullName>
    </recommendedName>
    <alternativeName>
        <fullName evidence="11">Dysadherin</fullName>
    </alternativeName>
</protein>
<proteinExistence type="evidence at protein level"/>
<gene>
    <name type="primary">FXYD5</name>
    <name type="synonym">DYSAD</name>
    <name type="synonym">IWU1</name>
    <name type="ORF">HSPC113</name>
    <name type="ORF">UNQ2561/PRO6241</name>
</gene>
<organism>
    <name type="scientific">Homo sapiens</name>
    <name type="common">Human</name>
    <dbReference type="NCBI Taxonomy" id="9606"/>
    <lineage>
        <taxon>Eukaryota</taxon>
        <taxon>Metazoa</taxon>
        <taxon>Chordata</taxon>
        <taxon>Craniata</taxon>
        <taxon>Vertebrata</taxon>
        <taxon>Euteleostomi</taxon>
        <taxon>Mammalia</taxon>
        <taxon>Eutheria</taxon>
        <taxon>Euarchontoglires</taxon>
        <taxon>Primates</taxon>
        <taxon>Haplorrhini</taxon>
        <taxon>Catarrhini</taxon>
        <taxon>Hominidae</taxon>
        <taxon>Homo</taxon>
    </lineage>
</organism>
<keyword id="KW-0025">Alternative splicing</keyword>
<keyword id="KW-1003">Cell membrane</keyword>
<keyword id="KW-0325">Glycoprotein</keyword>
<keyword id="KW-0406">Ion transport</keyword>
<keyword id="KW-0472">Membrane</keyword>
<keyword id="KW-0630">Potassium</keyword>
<keyword id="KW-0633">Potassium transport</keyword>
<keyword id="KW-1267">Proteomics identification</keyword>
<keyword id="KW-1185">Reference proteome</keyword>
<keyword id="KW-0732">Signal</keyword>
<keyword id="KW-0915">Sodium</keyword>
<keyword id="KW-0739">Sodium transport</keyword>
<keyword id="KW-0740">Sodium/potassium transport</keyword>
<keyword id="KW-0812">Transmembrane</keyword>
<keyword id="KW-1133">Transmembrane helix</keyword>
<keyword id="KW-0813">Transport</keyword>
<sequence>MSPSGRLCLLTIVGLILPTRGQTLKDTTSSSSADSTIMDIQVPTRAPDAVYTELQPTSPTPTWPADETPQPQTQTQQLEGTDGPLVTDPETHKSTKAAHPTDDTTTLSERPSPSTDVQTDPQTLKPSGFHEDDPFFYDEHTLRKRGLLVAAVLFITGIIILTSGKCRQLSRLCRNRCR</sequence>
<reference key="1">
    <citation type="journal article" date="2001" name="Biochim. Biophys. Acta">
        <title>A cDNA from human bone marrow encoding a protein exhibiting homology to the ATP11/PLM/MAT8 family of transmembrane proteins.</title>
        <authorList>
            <person name="Omasa T."/>
            <person name="Chen Y.G."/>
            <person name="Mantalaris A."/>
            <person name="Wu J.H.D."/>
        </authorList>
    </citation>
    <scope>NUCLEOTIDE SEQUENCE [MRNA] (ISOFORM 2)</scope>
    <scope>VARIANT HIS-176</scope>
    <source>
        <tissue>Bone marrow</tissue>
    </source>
</reference>
<reference key="2">
    <citation type="journal article" date="2002" name="Proc. Natl. Acad. Sci. U.S.A.">
        <title>Dysadherin, a cancer-associated cell membrane glycoprotein, down-regulates E-cadherin and promotes metastasis.</title>
        <authorList>
            <person name="Ino Y."/>
            <person name="Gotoh M."/>
            <person name="Sakamoto M."/>
            <person name="Tsukagoshi K."/>
            <person name="Hirohashi S."/>
        </authorList>
    </citation>
    <scope>NUCLEOTIDE SEQUENCE [MRNA] (ISOFORM 1)</scope>
    <scope>FUNCTION</scope>
    <scope>SUBCELLULAR LOCATION</scope>
    <scope>GLYCOSYLATION</scope>
    <scope>VARIANT HIS-176</scope>
    <source>
        <tissue>Leukocyte</tissue>
    </source>
</reference>
<reference key="3">
    <citation type="journal article" date="2000" name="Genome Res.">
        <title>Cloning and functional analysis of cDNAs with open reading frames for 300 previously undefined genes expressed in CD34+ hematopoietic stem/progenitor cells.</title>
        <authorList>
            <person name="Zhang Q.-H."/>
            <person name="Ye M."/>
            <person name="Wu X.-Y."/>
            <person name="Ren S.-X."/>
            <person name="Zhao M."/>
            <person name="Zhao C.-J."/>
            <person name="Fu G."/>
            <person name="Shen Y."/>
            <person name="Fan H.-Y."/>
            <person name="Lu G."/>
            <person name="Zhong M."/>
            <person name="Xu X.-R."/>
            <person name="Han Z.-G."/>
            <person name="Zhang J.-W."/>
            <person name="Tao J."/>
            <person name="Huang Q.-H."/>
            <person name="Zhou J."/>
            <person name="Hu G.-X."/>
            <person name="Gu J."/>
            <person name="Chen S.-J."/>
            <person name="Chen Z."/>
        </authorList>
    </citation>
    <scope>NUCLEOTIDE SEQUENCE [LARGE SCALE MRNA] (ISOFORM 1)</scope>
    <scope>VARIANT HIS-176</scope>
    <source>
        <tissue>Umbilical cord blood</tissue>
    </source>
</reference>
<reference key="4">
    <citation type="journal article" date="2003" name="Genome Res.">
        <title>The secreted protein discovery initiative (SPDI), a large-scale effort to identify novel human secreted and transmembrane proteins: a bioinformatics assessment.</title>
        <authorList>
            <person name="Clark H.F."/>
            <person name="Gurney A.L."/>
            <person name="Abaya E."/>
            <person name="Baker K."/>
            <person name="Baldwin D.T."/>
            <person name="Brush J."/>
            <person name="Chen J."/>
            <person name="Chow B."/>
            <person name="Chui C."/>
            <person name="Crowley C."/>
            <person name="Currell B."/>
            <person name="Deuel B."/>
            <person name="Dowd P."/>
            <person name="Eaton D."/>
            <person name="Foster J.S."/>
            <person name="Grimaldi C."/>
            <person name="Gu Q."/>
            <person name="Hass P.E."/>
            <person name="Heldens S."/>
            <person name="Huang A."/>
            <person name="Kim H.S."/>
            <person name="Klimowski L."/>
            <person name="Jin Y."/>
            <person name="Johnson S."/>
            <person name="Lee J."/>
            <person name="Lewis L."/>
            <person name="Liao D."/>
            <person name="Mark M.R."/>
            <person name="Robbie E."/>
            <person name="Sanchez C."/>
            <person name="Schoenfeld J."/>
            <person name="Seshagiri S."/>
            <person name="Simmons L."/>
            <person name="Singh J."/>
            <person name="Smith V."/>
            <person name="Stinson J."/>
            <person name="Vagts A."/>
            <person name="Vandlen R.L."/>
            <person name="Watanabe C."/>
            <person name="Wieand D."/>
            <person name="Woods K."/>
            <person name="Xie M.-H."/>
            <person name="Yansura D.G."/>
            <person name="Yi S."/>
            <person name="Yu G."/>
            <person name="Yuan J."/>
            <person name="Zhang M."/>
            <person name="Zhang Z."/>
            <person name="Goddard A.D."/>
            <person name="Wood W.I."/>
            <person name="Godowski P.J."/>
            <person name="Gray A.M."/>
        </authorList>
    </citation>
    <scope>NUCLEOTIDE SEQUENCE [LARGE SCALE MRNA] (ISOFORM 1)</scope>
</reference>
<reference key="5">
    <citation type="submission" date="2004-10" db="EMBL/GenBank/DDBJ databases">
        <title>Cloning of human full-length CDSs in BD Creator(TM) system donor vector.</title>
        <authorList>
            <person name="Kalnine N."/>
            <person name="Chen X."/>
            <person name="Rolfs A."/>
            <person name="Halleck A."/>
            <person name="Hines L."/>
            <person name="Eisenstein S."/>
            <person name="Koundinya M."/>
            <person name="Raphael J."/>
            <person name="Moreira D."/>
            <person name="Kelley T."/>
            <person name="LaBaer J."/>
            <person name="Lin Y."/>
            <person name="Phelan M."/>
            <person name="Farmer A."/>
        </authorList>
    </citation>
    <scope>NUCLEOTIDE SEQUENCE [LARGE SCALE MRNA] (ISOFORM 1)</scope>
    <scope>VARIANT HIS-176</scope>
</reference>
<reference key="6">
    <citation type="journal article" date="2004" name="Nature">
        <title>The DNA sequence and biology of human chromosome 19.</title>
        <authorList>
            <person name="Grimwood J."/>
            <person name="Gordon L.A."/>
            <person name="Olsen A.S."/>
            <person name="Terry A."/>
            <person name="Schmutz J."/>
            <person name="Lamerdin J.E."/>
            <person name="Hellsten U."/>
            <person name="Goodstein D."/>
            <person name="Couronne O."/>
            <person name="Tran-Gyamfi M."/>
            <person name="Aerts A."/>
            <person name="Altherr M."/>
            <person name="Ashworth L."/>
            <person name="Bajorek E."/>
            <person name="Black S."/>
            <person name="Branscomb E."/>
            <person name="Caenepeel S."/>
            <person name="Carrano A.V."/>
            <person name="Caoile C."/>
            <person name="Chan Y.M."/>
            <person name="Christensen M."/>
            <person name="Cleland C.A."/>
            <person name="Copeland A."/>
            <person name="Dalin E."/>
            <person name="Dehal P."/>
            <person name="Denys M."/>
            <person name="Detter J.C."/>
            <person name="Escobar J."/>
            <person name="Flowers D."/>
            <person name="Fotopulos D."/>
            <person name="Garcia C."/>
            <person name="Georgescu A.M."/>
            <person name="Glavina T."/>
            <person name="Gomez M."/>
            <person name="Gonzales E."/>
            <person name="Groza M."/>
            <person name="Hammon N."/>
            <person name="Hawkins T."/>
            <person name="Haydu L."/>
            <person name="Ho I."/>
            <person name="Huang W."/>
            <person name="Israni S."/>
            <person name="Jett J."/>
            <person name="Kadner K."/>
            <person name="Kimball H."/>
            <person name="Kobayashi A."/>
            <person name="Larionov V."/>
            <person name="Leem S.-H."/>
            <person name="Lopez F."/>
            <person name="Lou Y."/>
            <person name="Lowry S."/>
            <person name="Malfatti S."/>
            <person name="Martinez D."/>
            <person name="McCready P.M."/>
            <person name="Medina C."/>
            <person name="Morgan J."/>
            <person name="Nelson K."/>
            <person name="Nolan M."/>
            <person name="Ovcharenko I."/>
            <person name="Pitluck S."/>
            <person name="Pollard M."/>
            <person name="Popkie A.P."/>
            <person name="Predki P."/>
            <person name="Quan G."/>
            <person name="Ramirez L."/>
            <person name="Rash S."/>
            <person name="Retterer J."/>
            <person name="Rodriguez A."/>
            <person name="Rogers S."/>
            <person name="Salamov A."/>
            <person name="Salazar A."/>
            <person name="She X."/>
            <person name="Smith D."/>
            <person name="Slezak T."/>
            <person name="Solovyev V."/>
            <person name="Thayer N."/>
            <person name="Tice H."/>
            <person name="Tsai M."/>
            <person name="Ustaszewska A."/>
            <person name="Vo N."/>
            <person name="Wagner M."/>
            <person name="Wheeler J."/>
            <person name="Wu K."/>
            <person name="Xie G."/>
            <person name="Yang J."/>
            <person name="Dubchak I."/>
            <person name="Furey T.S."/>
            <person name="DeJong P."/>
            <person name="Dickson M."/>
            <person name="Gordon D."/>
            <person name="Eichler E.E."/>
            <person name="Pennacchio L.A."/>
            <person name="Richardson P."/>
            <person name="Stubbs L."/>
            <person name="Rokhsar D.S."/>
            <person name="Myers R.M."/>
            <person name="Rubin E.M."/>
            <person name="Lucas S.M."/>
        </authorList>
    </citation>
    <scope>NUCLEOTIDE SEQUENCE [LARGE SCALE GENOMIC DNA]</scope>
</reference>
<reference key="7">
    <citation type="journal article" date="2004" name="Genome Res.">
        <title>The status, quality, and expansion of the NIH full-length cDNA project: the Mammalian Gene Collection (MGC).</title>
        <authorList>
            <consortium name="The MGC Project Team"/>
        </authorList>
    </citation>
    <scope>NUCLEOTIDE SEQUENCE [LARGE SCALE MRNA] (ISOFORM 1)</scope>
    <scope>VARIANT HIS-176</scope>
    <source>
        <tissue>Pancreas</tissue>
    </source>
</reference>
<reference key="8">
    <citation type="journal article" date="2008" name="Am. J. Physiol.">
        <title>FXYD5 modulates Na+ absorption and is increased in cystic fibrosis airway epithelia.</title>
        <authorList>
            <person name="Miller T.J."/>
            <person name="Davis P.B."/>
        </authorList>
    </citation>
    <scope>FUNCTION</scope>
</reference>
<dbReference type="EMBL" id="AF177940">
    <property type="protein sequence ID" value="AAG09301.1"/>
    <property type="molecule type" value="mRNA"/>
</dbReference>
<dbReference type="EMBL" id="AB072911">
    <property type="protein sequence ID" value="BAB83766.1"/>
    <property type="molecule type" value="mRNA"/>
</dbReference>
<dbReference type="EMBL" id="AF161462">
    <property type="protein sequence ID" value="AAF29077.1"/>
    <property type="molecule type" value="mRNA"/>
</dbReference>
<dbReference type="EMBL" id="AY358991">
    <property type="protein sequence ID" value="AAQ89350.1"/>
    <property type="molecule type" value="mRNA"/>
</dbReference>
<dbReference type="EMBL" id="BT007343">
    <property type="protein sequence ID" value="AAP36007.1"/>
    <property type="molecule type" value="mRNA"/>
</dbReference>
<dbReference type="EMBL" id="AC002390">
    <property type="status" value="NOT_ANNOTATED_CDS"/>
    <property type="molecule type" value="Genomic_DNA"/>
</dbReference>
<dbReference type="EMBL" id="AC020907">
    <property type="status" value="NOT_ANNOTATED_CDS"/>
    <property type="molecule type" value="Genomic_DNA"/>
</dbReference>
<dbReference type="EMBL" id="BC009642">
    <property type="protein sequence ID" value="AAH09642.1"/>
    <property type="molecule type" value="mRNA"/>
</dbReference>
<dbReference type="CCDS" id="CCDS12447.1">
    <molecule id="Q96DB9-1"/>
</dbReference>
<dbReference type="RefSeq" id="NP_001158077.1">
    <molecule id="Q96DB9-1"/>
    <property type="nucleotide sequence ID" value="NM_001164605.2"/>
</dbReference>
<dbReference type="RefSeq" id="NP_001307842.1">
    <property type="nucleotide sequence ID" value="NM_001320913.1"/>
</dbReference>
<dbReference type="RefSeq" id="NP_054883.3">
    <molecule id="Q96DB9-1"/>
    <property type="nucleotide sequence ID" value="NM_014164.5"/>
</dbReference>
<dbReference type="RefSeq" id="NP_659003.1">
    <molecule id="Q96DB9-1"/>
    <property type="nucleotide sequence ID" value="NM_144779.3"/>
</dbReference>
<dbReference type="SMR" id="Q96DB9"/>
<dbReference type="BioGRID" id="119800">
    <property type="interactions" value="1"/>
</dbReference>
<dbReference type="ComplexPortal" id="CPX-8143">
    <property type="entry name" value="Sodium:potassium-exchanging ATPase complex, FXYD5 variant"/>
</dbReference>
<dbReference type="FunCoup" id="Q96DB9">
    <property type="interactions" value="85"/>
</dbReference>
<dbReference type="IntAct" id="Q96DB9">
    <property type="interactions" value="1"/>
</dbReference>
<dbReference type="STRING" id="9606.ENSP00000444839"/>
<dbReference type="TCDB" id="1.A.27.3.1">
    <property type="family name" value="the phospholemman (plm) family"/>
</dbReference>
<dbReference type="GlyCosmos" id="Q96DB9">
    <property type="glycosylation" value="2 sites, 2 glycans"/>
</dbReference>
<dbReference type="GlyGen" id="Q96DB9">
    <property type="glycosylation" value="15 sites, 4 O-linked glycans (14 sites)"/>
</dbReference>
<dbReference type="iPTMnet" id="Q96DB9"/>
<dbReference type="PhosphoSitePlus" id="Q96DB9"/>
<dbReference type="SwissPalm" id="Q96DB9"/>
<dbReference type="BioMuta" id="FXYD5"/>
<dbReference type="DMDM" id="311033386"/>
<dbReference type="jPOST" id="Q96DB9"/>
<dbReference type="MassIVE" id="Q96DB9"/>
<dbReference type="PaxDb" id="9606-ENSP00000344254"/>
<dbReference type="PeptideAtlas" id="Q96DB9"/>
<dbReference type="ProteomicsDB" id="76270">
    <molecule id="Q96DB9-1"/>
</dbReference>
<dbReference type="Pumba" id="Q96DB9"/>
<dbReference type="Antibodypedia" id="2277">
    <property type="antibodies" value="203 antibodies from 32 providers"/>
</dbReference>
<dbReference type="DNASU" id="53827"/>
<dbReference type="Ensembl" id="ENST00000342879.7">
    <molecule id="Q96DB9-1"/>
    <property type="protein sequence ID" value="ENSP00000344254.3"/>
    <property type="gene ID" value="ENSG00000089327.16"/>
</dbReference>
<dbReference type="Ensembl" id="ENST00000392217.3">
    <molecule id="Q96DB9-2"/>
    <property type="protein sequence ID" value="ENSP00000376051.3"/>
    <property type="gene ID" value="ENSG00000089327.16"/>
</dbReference>
<dbReference type="Ensembl" id="ENST00000392219.7">
    <molecule id="Q96DB9-1"/>
    <property type="protein sequence ID" value="ENSP00000376053.2"/>
    <property type="gene ID" value="ENSG00000089327.16"/>
</dbReference>
<dbReference type="Ensembl" id="ENST00000423817.7">
    <molecule id="Q96DB9-1"/>
    <property type="protein sequence ID" value="ENSP00000393848.2"/>
    <property type="gene ID" value="ENSG00000089327.16"/>
</dbReference>
<dbReference type="Ensembl" id="ENST00000541435.6">
    <molecule id="Q96DB9-1"/>
    <property type="protein sequence ID" value="ENSP00000443390.1"/>
    <property type="gene ID" value="ENSG00000089327.16"/>
</dbReference>
<dbReference type="Ensembl" id="ENST00000590686.5">
    <molecule id="Q96DB9-1"/>
    <property type="protein sequence ID" value="ENSP00000465667.1"/>
    <property type="gene ID" value="ENSG00000089327.16"/>
</dbReference>
<dbReference type="GeneID" id="53827"/>
<dbReference type="KEGG" id="hsa:53827"/>
<dbReference type="MANE-Select" id="ENST00000392219.7">
    <property type="protein sequence ID" value="ENSP00000376053.2"/>
    <property type="RefSeq nucleotide sequence ID" value="NM_014164.6"/>
    <property type="RefSeq protein sequence ID" value="NP_054883.3"/>
</dbReference>
<dbReference type="UCSC" id="uc002nyg.3">
    <molecule id="Q96DB9-1"/>
    <property type="organism name" value="human"/>
</dbReference>
<dbReference type="AGR" id="HGNC:4029"/>
<dbReference type="CTD" id="53827"/>
<dbReference type="DisGeNET" id="53827"/>
<dbReference type="GeneCards" id="FXYD5"/>
<dbReference type="HGNC" id="HGNC:4029">
    <property type="gene designation" value="FXYD5"/>
</dbReference>
<dbReference type="HPA" id="ENSG00000089327">
    <property type="expression patterns" value="Low tissue specificity"/>
</dbReference>
<dbReference type="MIM" id="606669">
    <property type="type" value="gene"/>
</dbReference>
<dbReference type="neXtProt" id="NX_Q96DB9"/>
<dbReference type="OpenTargets" id="ENSG00000089327"/>
<dbReference type="PharmGKB" id="PA28445"/>
<dbReference type="VEuPathDB" id="HostDB:ENSG00000089327"/>
<dbReference type="eggNOG" id="ENOG502SA05">
    <property type="taxonomic scope" value="Eukaryota"/>
</dbReference>
<dbReference type="GeneTree" id="ENSGT00940000153062"/>
<dbReference type="HOGENOM" id="CLU_109413_0_0_1"/>
<dbReference type="InParanoid" id="Q96DB9"/>
<dbReference type="OMA" id="PRLCRNY"/>
<dbReference type="OrthoDB" id="9451811at2759"/>
<dbReference type="PAN-GO" id="Q96DB9">
    <property type="GO annotations" value="2 GO annotations based on evolutionary models"/>
</dbReference>
<dbReference type="PhylomeDB" id="Q96DB9"/>
<dbReference type="TreeFam" id="TF338182"/>
<dbReference type="PathwayCommons" id="Q96DB9"/>
<dbReference type="SignaLink" id="Q96DB9"/>
<dbReference type="BioGRID-ORCS" id="53827">
    <property type="hits" value="12 hits in 1159 CRISPR screens"/>
</dbReference>
<dbReference type="ChiTaRS" id="FXYD5">
    <property type="organism name" value="human"/>
</dbReference>
<dbReference type="GeneWiki" id="FXYD5"/>
<dbReference type="GenomeRNAi" id="53827"/>
<dbReference type="Pharos" id="Q96DB9">
    <property type="development level" value="Tbio"/>
</dbReference>
<dbReference type="PRO" id="PR:Q96DB9"/>
<dbReference type="Proteomes" id="UP000005640">
    <property type="component" value="Chromosome 19"/>
</dbReference>
<dbReference type="RNAct" id="Q96DB9">
    <property type="molecule type" value="protein"/>
</dbReference>
<dbReference type="Bgee" id="ENSG00000089327">
    <property type="expression patterns" value="Expressed in granulocyte and 169 other cell types or tissues"/>
</dbReference>
<dbReference type="ExpressionAtlas" id="Q96DB9">
    <property type="expression patterns" value="baseline and differential"/>
</dbReference>
<dbReference type="GO" id="GO:0016323">
    <property type="term" value="C:basolateral plasma membrane"/>
    <property type="evidence" value="ECO:0007669"/>
    <property type="project" value="UniProtKB-SubCell"/>
</dbReference>
<dbReference type="GO" id="GO:0016020">
    <property type="term" value="C:membrane"/>
    <property type="evidence" value="ECO:0000314"/>
    <property type="project" value="UniProtKB"/>
</dbReference>
<dbReference type="GO" id="GO:0005886">
    <property type="term" value="C:plasma membrane"/>
    <property type="evidence" value="ECO:0000314"/>
    <property type="project" value="UniProtKB"/>
</dbReference>
<dbReference type="GO" id="GO:0003779">
    <property type="term" value="F:actin binding"/>
    <property type="evidence" value="ECO:0000314"/>
    <property type="project" value="UniProtKB"/>
</dbReference>
<dbReference type="GO" id="GO:0045296">
    <property type="term" value="F:cadherin binding"/>
    <property type="evidence" value="ECO:0000314"/>
    <property type="project" value="UniProtKB"/>
</dbReference>
<dbReference type="GO" id="GO:0017080">
    <property type="term" value="F:sodium channel regulator activity"/>
    <property type="evidence" value="ECO:0000314"/>
    <property type="project" value="UniProtKB"/>
</dbReference>
<dbReference type="GO" id="GO:0030033">
    <property type="term" value="P:microvillus assembly"/>
    <property type="evidence" value="ECO:0000303"/>
    <property type="project" value="UniProtKB"/>
</dbReference>
<dbReference type="GO" id="GO:0046588">
    <property type="term" value="P:negative regulation of calcium-dependent cell-cell adhesion"/>
    <property type="evidence" value="ECO:0000303"/>
    <property type="project" value="UniProtKB"/>
</dbReference>
<dbReference type="GO" id="GO:1903278">
    <property type="term" value="P:positive regulation of sodium ion export across plasma membrane"/>
    <property type="evidence" value="ECO:0000318"/>
    <property type="project" value="GO_Central"/>
</dbReference>
<dbReference type="GO" id="GO:0006813">
    <property type="term" value="P:potassium ion transport"/>
    <property type="evidence" value="ECO:0007669"/>
    <property type="project" value="UniProtKB-KW"/>
</dbReference>
<dbReference type="GO" id="GO:0006814">
    <property type="term" value="P:sodium ion transport"/>
    <property type="evidence" value="ECO:0007669"/>
    <property type="project" value="UniProtKB-KW"/>
</dbReference>
<dbReference type="CDD" id="cd20323">
    <property type="entry name" value="FXYD_FXYD5"/>
    <property type="match status" value="1"/>
</dbReference>
<dbReference type="FunFam" id="1.20.5.780:FF:000005">
    <property type="entry name" value="FXYD domain-containing ion transport regulator"/>
    <property type="match status" value="1"/>
</dbReference>
<dbReference type="Gene3D" id="1.20.5.780">
    <property type="entry name" value="Single helix bin"/>
    <property type="match status" value="1"/>
</dbReference>
<dbReference type="InterPro" id="IPR047297">
    <property type="entry name" value="FXYD_motif"/>
</dbReference>
<dbReference type="InterPro" id="IPR000272">
    <property type="entry name" value="Ion-transport_regulator_FXYD"/>
</dbReference>
<dbReference type="PANTHER" id="PTHR14132:SF14">
    <property type="entry name" value="FXYD DOMAIN-CONTAINING ION TRANSPORT REGULATOR 5"/>
    <property type="match status" value="1"/>
</dbReference>
<dbReference type="PANTHER" id="PTHR14132">
    <property type="entry name" value="SODIUM/POTASSIUM-TRANSPORTING ATPASE SUBUNIT GAMMA"/>
    <property type="match status" value="1"/>
</dbReference>
<dbReference type="Pfam" id="PF02038">
    <property type="entry name" value="ATP1G1_PLM_MAT8"/>
    <property type="match status" value="1"/>
</dbReference>
<dbReference type="PROSITE" id="PS01310">
    <property type="entry name" value="FXYD"/>
    <property type="match status" value="1"/>
</dbReference>
<feature type="signal peptide" evidence="1">
    <location>
        <begin position="1"/>
        <end position="21"/>
    </location>
</feature>
<feature type="chain" id="PRO_0000010369" description="FXYD domain-containing ion transport regulator 5">
    <location>
        <begin position="22"/>
        <end position="178"/>
    </location>
</feature>
<feature type="topological domain" description="Extracellular" evidence="2">
    <location>
        <begin position="22"/>
        <end position="145"/>
    </location>
</feature>
<feature type="transmembrane region" description="Helical" evidence="2">
    <location>
        <begin position="146"/>
        <end position="164"/>
    </location>
</feature>
<feature type="topological domain" description="Cytoplasmic" evidence="2">
    <location>
        <begin position="165"/>
        <end position="178"/>
    </location>
</feature>
<feature type="region of interest" description="Disordered" evidence="3">
    <location>
        <begin position="23"/>
        <end position="131"/>
    </location>
</feature>
<feature type="compositionally biased region" description="Low complexity" evidence="3">
    <location>
        <begin position="26"/>
        <end position="36"/>
    </location>
</feature>
<feature type="compositionally biased region" description="Low complexity" evidence="3">
    <location>
        <begin position="68"/>
        <end position="77"/>
    </location>
</feature>
<feature type="compositionally biased region" description="Polar residues" evidence="3">
    <location>
        <begin position="103"/>
        <end position="125"/>
    </location>
</feature>
<feature type="splice variant" id="VSP_001584" description="In isoform 2." evidence="10">
    <original>MSPSGRLCLLTIVGLILPTRGQTLKDTTSSSSADSTIMDIQVPTRAPDAVYTELQPTSPTPTWPADETPQPQTQTQQLEGTDGPLVTDPETHKSTKA</original>
    <variation>MQTLSNIPCFCLHGSLLPSTDLATLS</variation>
    <location>
        <begin position="1"/>
        <end position="97"/>
    </location>
</feature>
<feature type="sequence variant" id="VAR_012349" description="In dbSNP:rs1688005.">
    <original>S</original>
    <variation>A</variation>
    <location>
        <position position="35"/>
    </location>
</feature>
<feature type="sequence variant" id="VAR_027959" description="In dbSNP:rs12110." evidence="4 5 6 7 9">
    <original>R</original>
    <variation>H</variation>
    <location>
        <position position="176"/>
    </location>
</feature>
<feature type="sequence conflict" description="In Ref. 3; AAF29077." evidence="12" ref="3">
    <original>HT</original>
    <variation>SH</variation>
    <location>
        <begin position="140"/>
        <end position="141"/>
    </location>
</feature>
<accession>Q96DB9</accession>
<accession>B7WNZ8</accession>
<accession>Q6UW44</accession>
<accession>Q9HC34</accession>
<accession>Q9P039</accession>